<reference key="1">
    <citation type="journal article" date="2000" name="DNA Res.">
        <title>Structural analysis of Arabidopsis thaliana chromosome 5. X. Sequence features of the regions of 3,076,755 bp covered by sixty P1 and TAC clones.</title>
        <authorList>
            <person name="Sato S."/>
            <person name="Nakamura Y."/>
            <person name="Kaneko T."/>
            <person name="Katoh T."/>
            <person name="Asamizu E."/>
            <person name="Kotani H."/>
            <person name="Tabata S."/>
        </authorList>
    </citation>
    <scope>NUCLEOTIDE SEQUENCE [LARGE SCALE GENOMIC DNA]</scope>
    <source>
        <strain>cv. Columbia</strain>
    </source>
</reference>
<reference key="2">
    <citation type="journal article" date="2017" name="Plant J.">
        <title>Araport11: a complete reannotation of the Arabidopsis thaliana reference genome.</title>
        <authorList>
            <person name="Cheng C.Y."/>
            <person name="Krishnakumar V."/>
            <person name="Chan A.P."/>
            <person name="Thibaud-Nissen F."/>
            <person name="Schobel S."/>
            <person name="Town C.D."/>
        </authorList>
    </citation>
    <scope>GENOME REANNOTATION</scope>
    <source>
        <strain>cv. Columbia</strain>
    </source>
</reference>
<reference key="3">
    <citation type="journal article" date="2003" name="Science">
        <title>Empirical analysis of transcriptional activity in the Arabidopsis genome.</title>
        <authorList>
            <person name="Yamada K."/>
            <person name="Lim J."/>
            <person name="Dale J.M."/>
            <person name="Chen H."/>
            <person name="Shinn P."/>
            <person name="Palm C.J."/>
            <person name="Southwick A.M."/>
            <person name="Wu H.C."/>
            <person name="Kim C.J."/>
            <person name="Nguyen M."/>
            <person name="Pham P.K."/>
            <person name="Cheuk R.F."/>
            <person name="Karlin-Newmann G."/>
            <person name="Liu S.X."/>
            <person name="Lam B."/>
            <person name="Sakano H."/>
            <person name="Wu T."/>
            <person name="Yu G."/>
            <person name="Miranda M."/>
            <person name="Quach H.L."/>
            <person name="Tripp M."/>
            <person name="Chang C.H."/>
            <person name="Lee J.M."/>
            <person name="Toriumi M.J."/>
            <person name="Chan M.M."/>
            <person name="Tang C.C."/>
            <person name="Onodera C.S."/>
            <person name="Deng J.M."/>
            <person name="Akiyama K."/>
            <person name="Ansari Y."/>
            <person name="Arakawa T."/>
            <person name="Banh J."/>
            <person name="Banno F."/>
            <person name="Bowser L."/>
            <person name="Brooks S.Y."/>
            <person name="Carninci P."/>
            <person name="Chao Q."/>
            <person name="Choy N."/>
            <person name="Enju A."/>
            <person name="Goldsmith A.D."/>
            <person name="Gurjal M."/>
            <person name="Hansen N.F."/>
            <person name="Hayashizaki Y."/>
            <person name="Johnson-Hopson C."/>
            <person name="Hsuan V.W."/>
            <person name="Iida K."/>
            <person name="Karnes M."/>
            <person name="Khan S."/>
            <person name="Koesema E."/>
            <person name="Ishida J."/>
            <person name="Jiang P.X."/>
            <person name="Jones T."/>
            <person name="Kawai J."/>
            <person name="Kamiya A."/>
            <person name="Meyers C."/>
            <person name="Nakajima M."/>
            <person name="Narusaka M."/>
            <person name="Seki M."/>
            <person name="Sakurai T."/>
            <person name="Satou M."/>
            <person name="Tamse R."/>
            <person name="Vaysberg M."/>
            <person name="Wallender E.K."/>
            <person name="Wong C."/>
            <person name="Yamamura Y."/>
            <person name="Yuan S."/>
            <person name="Shinozaki K."/>
            <person name="Davis R.W."/>
            <person name="Theologis A."/>
            <person name="Ecker J.R."/>
        </authorList>
    </citation>
    <scope>NUCLEOTIDE SEQUENCE [LARGE SCALE MRNA] (ISOFORMS 2 AND 3)</scope>
    <source>
        <strain>cv. Columbia</strain>
    </source>
</reference>
<reference key="4">
    <citation type="submission" date="2006-02" db="EMBL/GenBank/DDBJ databases">
        <title>Arabidopsis ORF clones.</title>
        <authorList>
            <person name="Shinn P."/>
            <person name="Chen H."/>
            <person name="Kim C.J."/>
            <person name="Ecker J.R."/>
        </authorList>
    </citation>
    <scope>NUCLEOTIDE SEQUENCE [LARGE SCALE MRNA] (ISOFORM 1)</scope>
    <source>
        <strain>cv. Columbia</strain>
    </source>
</reference>
<reference key="5">
    <citation type="journal article" date="2003" name="Mol. Biol. Evol.">
        <title>The basic helix-loop-helix transcription factor family in plants: a genome-wide study of protein structure and functional diversity.</title>
        <authorList>
            <person name="Heim M.A."/>
            <person name="Jakoby M."/>
            <person name="Werber M."/>
            <person name="Martin C."/>
            <person name="Weisshaar B."/>
            <person name="Bailey P.C."/>
        </authorList>
    </citation>
    <scope>NUCLEOTIDE SEQUENCE [MRNA] OF 59-248 (ISOFORM 1)</scope>
    <scope>TISSUE SPECIFICITY</scope>
    <scope>GENE FAMILY</scope>
    <scope>NOMENCLATURE</scope>
    <source>
        <strain>cv. Columbia</strain>
    </source>
</reference>
<reference key="6">
    <citation type="journal article" date="2003" name="Plant Cell">
        <title>The Arabidopsis basic/helix-loop-helix transcription factor family.</title>
        <authorList>
            <person name="Toledo-Ortiz G."/>
            <person name="Huq E."/>
            <person name="Quail P.H."/>
        </authorList>
    </citation>
    <scope>GENE FAMILY</scope>
</reference>
<reference key="7">
    <citation type="journal article" date="2003" name="Plant Cell">
        <title>Update on the basic helix-loop-helix transcription factor gene family in Arabidopsis thaliana.</title>
        <authorList>
            <person name="Bailey P.C."/>
            <person name="Martin C."/>
            <person name="Toledo-Ortiz G."/>
            <person name="Quail P.H."/>
            <person name="Huq E."/>
            <person name="Heim M.A."/>
            <person name="Jakoby M."/>
            <person name="Werber M."/>
            <person name="Weisshaar B."/>
        </authorList>
    </citation>
    <scope>GENE FAMILY</scope>
    <scope>NOMENCLATURE</scope>
</reference>
<protein>
    <recommendedName>
        <fullName>Transcription factor bHLH35</fullName>
    </recommendedName>
    <alternativeName>
        <fullName>Basic helix-loop-helix protein 35</fullName>
        <shortName>AtbHLH35</shortName>
        <shortName>bHLH 35</shortName>
    </alternativeName>
    <alternativeName>
        <fullName>Transcription factor EN 41</fullName>
    </alternativeName>
    <alternativeName>
        <fullName>bHLH transcription factor bHLH035</fullName>
    </alternativeName>
</protein>
<organism>
    <name type="scientific">Arabidopsis thaliana</name>
    <name type="common">Mouse-ear cress</name>
    <dbReference type="NCBI Taxonomy" id="3702"/>
    <lineage>
        <taxon>Eukaryota</taxon>
        <taxon>Viridiplantae</taxon>
        <taxon>Streptophyta</taxon>
        <taxon>Embryophyta</taxon>
        <taxon>Tracheophyta</taxon>
        <taxon>Spermatophyta</taxon>
        <taxon>Magnoliopsida</taxon>
        <taxon>eudicotyledons</taxon>
        <taxon>Gunneridae</taxon>
        <taxon>Pentapetalae</taxon>
        <taxon>rosids</taxon>
        <taxon>malvids</taxon>
        <taxon>Brassicales</taxon>
        <taxon>Brassicaceae</taxon>
        <taxon>Camelineae</taxon>
        <taxon>Arabidopsis</taxon>
    </lineage>
</organism>
<gene>
    <name type="primary">BHLH35</name>
    <name type="synonym">EN41</name>
    <name type="ordered locus">At5g57150</name>
    <name type="ORF">MUL3.10</name>
</gene>
<dbReference type="EMBL" id="AB023042">
    <property type="protein sequence ID" value="BAA97365.1"/>
    <property type="status" value="ALT_SEQ"/>
    <property type="molecule type" value="Genomic_DNA"/>
</dbReference>
<dbReference type="EMBL" id="CP002688">
    <property type="protein sequence ID" value="AED96854.1"/>
    <property type="molecule type" value="Genomic_DNA"/>
</dbReference>
<dbReference type="EMBL" id="CP002688">
    <property type="protein sequence ID" value="AED96855.1"/>
    <property type="molecule type" value="Genomic_DNA"/>
</dbReference>
<dbReference type="EMBL" id="AY058072">
    <property type="protein sequence ID" value="AAL24180.1"/>
    <property type="molecule type" value="mRNA"/>
</dbReference>
<dbReference type="EMBL" id="AY136380">
    <property type="status" value="NOT_ANNOTATED_CDS"/>
    <property type="molecule type" value="mRNA"/>
</dbReference>
<dbReference type="EMBL" id="BT024472">
    <property type="protein sequence ID" value="ABD19653.1"/>
    <property type="molecule type" value="mRNA"/>
</dbReference>
<dbReference type="EMBL" id="AF488574">
    <property type="status" value="NOT_ANNOTATED_CDS"/>
    <property type="molecule type" value="mRNA"/>
</dbReference>
<dbReference type="RefSeq" id="NP_974947.1">
    <molecule id="Q2HIV9-3"/>
    <property type="nucleotide sequence ID" value="NM_203218.2"/>
</dbReference>
<dbReference type="RefSeq" id="NP_974948.1">
    <molecule id="Q2HIV9-2"/>
    <property type="nucleotide sequence ID" value="NM_203219.2"/>
</dbReference>
<dbReference type="SMR" id="Q2HIV9"/>
<dbReference type="BioGRID" id="21065">
    <property type="interactions" value="1"/>
</dbReference>
<dbReference type="FunCoup" id="Q2HIV9">
    <property type="interactions" value="138"/>
</dbReference>
<dbReference type="STRING" id="3702.Q2HIV9"/>
<dbReference type="iPTMnet" id="Q2HIV9"/>
<dbReference type="PaxDb" id="3702-AT5G57150.4"/>
<dbReference type="EnsemblPlants" id="AT5G57150.2">
    <molecule id="Q2HIV9-2"/>
    <property type="protein sequence ID" value="AT5G57150.2"/>
    <property type="gene ID" value="AT5G57150"/>
</dbReference>
<dbReference type="EnsemblPlants" id="AT5G57150.3">
    <molecule id="Q2HIV9-3"/>
    <property type="protein sequence ID" value="AT5G57150.3"/>
    <property type="gene ID" value="AT5G57150"/>
</dbReference>
<dbReference type="GeneID" id="835821"/>
<dbReference type="Gramene" id="AT5G57150.2">
    <molecule id="Q2HIV9-2"/>
    <property type="protein sequence ID" value="AT5G57150.2"/>
    <property type="gene ID" value="AT5G57150"/>
</dbReference>
<dbReference type="Gramene" id="AT5G57150.3">
    <molecule id="Q2HIV9-3"/>
    <property type="protein sequence ID" value="AT5G57150.3"/>
    <property type="gene ID" value="AT5G57150"/>
</dbReference>
<dbReference type="KEGG" id="ath:AT5G57150"/>
<dbReference type="Araport" id="AT5G57150"/>
<dbReference type="TAIR" id="AT5G57150"/>
<dbReference type="eggNOG" id="ENOG502QWG4">
    <property type="taxonomic scope" value="Eukaryota"/>
</dbReference>
<dbReference type="InParanoid" id="Q2HIV9"/>
<dbReference type="PhylomeDB" id="Q2HIV9"/>
<dbReference type="PRO" id="PR:Q2HIV9"/>
<dbReference type="Proteomes" id="UP000006548">
    <property type="component" value="Chromosome 5"/>
</dbReference>
<dbReference type="ExpressionAtlas" id="Q2HIV9">
    <property type="expression patterns" value="baseline and differential"/>
</dbReference>
<dbReference type="GO" id="GO:0005634">
    <property type="term" value="C:nucleus"/>
    <property type="evidence" value="ECO:0007669"/>
    <property type="project" value="UniProtKB-SubCell"/>
</dbReference>
<dbReference type="GO" id="GO:0003677">
    <property type="term" value="F:DNA binding"/>
    <property type="evidence" value="ECO:0007669"/>
    <property type="project" value="UniProtKB-KW"/>
</dbReference>
<dbReference type="GO" id="GO:0046983">
    <property type="term" value="F:protein dimerization activity"/>
    <property type="evidence" value="ECO:0007669"/>
    <property type="project" value="InterPro"/>
</dbReference>
<dbReference type="GO" id="GO:0006355">
    <property type="term" value="P:regulation of DNA-templated transcription"/>
    <property type="evidence" value="ECO:0007669"/>
    <property type="project" value="UniProtKB-ARBA"/>
</dbReference>
<dbReference type="CDD" id="cd11450">
    <property type="entry name" value="bHLH_AtFIT_like"/>
    <property type="match status" value="1"/>
</dbReference>
<dbReference type="FunFam" id="4.10.280.10:FF:000096">
    <property type="entry name" value="Basic helix-loop-helix (BHLH) DNA-binding superfamily protein"/>
    <property type="match status" value="1"/>
</dbReference>
<dbReference type="Gene3D" id="4.10.280.10">
    <property type="entry name" value="Helix-loop-helix DNA-binding domain"/>
    <property type="match status" value="1"/>
</dbReference>
<dbReference type="InterPro" id="IPR054502">
    <property type="entry name" value="bHLH-TF_ACT-like_plant"/>
</dbReference>
<dbReference type="InterPro" id="IPR011598">
    <property type="entry name" value="bHLH_dom"/>
</dbReference>
<dbReference type="InterPro" id="IPR036638">
    <property type="entry name" value="HLH_DNA-bd_sf"/>
</dbReference>
<dbReference type="InterPro" id="IPR051358">
    <property type="entry name" value="TF_AMS/ICE1/BHLH6-like"/>
</dbReference>
<dbReference type="PANTHER" id="PTHR31945:SF26">
    <property type="entry name" value="TRANSCRIPTION FACTOR BHLH35"/>
    <property type="match status" value="1"/>
</dbReference>
<dbReference type="PANTHER" id="PTHR31945">
    <property type="entry name" value="TRANSCRIPTION FACTOR SCREAM2-RELATED"/>
    <property type="match status" value="1"/>
</dbReference>
<dbReference type="Pfam" id="PF22754">
    <property type="entry name" value="bHLH-TF_ACT-like_plant"/>
    <property type="match status" value="1"/>
</dbReference>
<dbReference type="Pfam" id="PF00010">
    <property type="entry name" value="HLH"/>
    <property type="match status" value="1"/>
</dbReference>
<dbReference type="SMART" id="SM00353">
    <property type="entry name" value="HLH"/>
    <property type="match status" value="1"/>
</dbReference>
<dbReference type="SUPFAM" id="SSF47459">
    <property type="entry name" value="HLH, helix-loop-helix DNA-binding domain"/>
    <property type="match status" value="1"/>
</dbReference>
<dbReference type="PROSITE" id="PS50888">
    <property type="entry name" value="BHLH"/>
    <property type="match status" value="1"/>
</dbReference>
<keyword id="KW-0025">Alternative splicing</keyword>
<keyword id="KW-0238">DNA-binding</keyword>
<keyword id="KW-0539">Nucleus</keyword>
<keyword id="KW-1185">Reference proteome</keyword>
<keyword id="KW-0804">Transcription</keyword>
<keyword id="KW-0805">Transcription regulation</keyword>
<accession>Q2HIV9</accession>
<accession>Q93Z71</accession>
<accession>Q9LU71</accession>
<sequence>MEDIVDQELSNYWEPSSFLQNEDFEYDRSWPLEEAISGSYDSSSPDGAASSPASKNIVSERNRRQKLNQRLFALRSVVPNITKMDKASIIKDAISYIEGLQYEEKKLEAEIRELESTPKSSLSFSKDFDRDLLVPVTSKKMKQLDSGSSTSLIEVLELKVTFMGERTMVVSVTCNKRTDTMVKLCEVFESLNLKILTSNLTSFSGMIFHTVFIEADEEEQEVLRLKIETGIGAYNETQSPTLSIDSLY</sequence>
<evidence type="ECO:0000255" key="1">
    <source>
        <dbReference type="PROSITE-ProRule" id="PRU00981"/>
    </source>
</evidence>
<evidence type="ECO:0000256" key="2">
    <source>
        <dbReference type="SAM" id="MobiDB-lite"/>
    </source>
</evidence>
<evidence type="ECO:0000269" key="3">
    <source>
    </source>
</evidence>
<evidence type="ECO:0000303" key="4">
    <source>
    </source>
</evidence>
<evidence type="ECO:0000305" key="5"/>
<comment type="subunit">
    <text evidence="5">Homodimer.</text>
</comment>
<comment type="subcellular location">
    <subcellularLocation>
        <location evidence="1">Nucleus</location>
    </subcellularLocation>
</comment>
<comment type="alternative products">
    <event type="alternative splicing"/>
    <isoform>
        <id>Q2HIV9-1</id>
        <name>1</name>
        <sequence type="displayed"/>
    </isoform>
    <isoform>
        <id>Q2HIV9-2</id>
        <name>2</name>
        <sequence type="described" ref="VSP_036084"/>
    </isoform>
    <isoform>
        <id>Q2HIV9-3</id>
        <name>3</name>
        <sequence type="described" ref="VSP_036085 VSP_036086"/>
    </isoform>
</comment>
<comment type="tissue specificity">
    <text evidence="3">Expressed constitutively in roots, leaves, stems, and flowers.</text>
</comment>
<comment type="sequence caution" evidence="5">
    <conflict type="erroneous gene model prediction">
        <sequence resource="EMBL-CDS" id="BAA97365"/>
    </conflict>
</comment>
<proteinExistence type="evidence at transcript level"/>
<feature type="chain" id="PRO_0000358742" description="Transcription factor bHLH35">
    <location>
        <begin position="1"/>
        <end position="248"/>
    </location>
</feature>
<feature type="domain" description="bHLH" evidence="1">
    <location>
        <begin position="51"/>
        <end position="100"/>
    </location>
</feature>
<feature type="region of interest" description="Disordered" evidence="2">
    <location>
        <begin position="37"/>
        <end position="60"/>
    </location>
</feature>
<feature type="compositionally biased region" description="Low complexity" evidence="2">
    <location>
        <begin position="37"/>
        <end position="54"/>
    </location>
</feature>
<feature type="splice variant" id="VSP_036084" description="In isoform 2." evidence="4">
    <original>ADEEEQEVLRLKIETGIGAYNETQSPTLSIDSLY</original>
    <variation>VSIFLSLSLLSL</variation>
    <location>
        <begin position="215"/>
        <end position="248"/>
    </location>
</feature>
<feature type="splice variant" id="VSP_036085" description="In isoform 3." evidence="4">
    <original>ADEEE</original>
    <variation>IAIAN</variation>
    <location>
        <begin position="215"/>
        <end position="219"/>
    </location>
</feature>
<feature type="splice variant" id="VSP_036086" description="In isoform 3." evidence="4">
    <location>
        <begin position="220"/>
        <end position="248"/>
    </location>
</feature>
<feature type="sequence conflict" description="In Ref. 5; AF488574." evidence="5" ref="5">
    <original>S</original>
    <variation>G</variation>
    <location>
        <position position="123"/>
    </location>
</feature>
<feature type="sequence conflict" description="In Ref. 5; AF488574." evidence="5" ref="5">
    <original>L</original>
    <variation>Q</variation>
    <location>
        <position position="184"/>
    </location>
</feature>
<name>BH035_ARATH</name>